<accession>A7X3A2</accession>
<protein>
    <recommendedName>
        <fullName evidence="1">Large ribosomal subunit protein bL35</fullName>
    </recommendedName>
    <alternativeName>
        <fullName evidence="3">50S ribosomal protein L35</fullName>
    </alternativeName>
</protein>
<dbReference type="EMBL" id="AP009324">
    <property type="protein sequence ID" value="BAF78549.1"/>
    <property type="molecule type" value="Genomic_DNA"/>
</dbReference>
<dbReference type="RefSeq" id="WP_001125540.1">
    <property type="nucleotide sequence ID" value="NZ_CTYB01000017.1"/>
</dbReference>
<dbReference type="SMR" id="A7X3A2"/>
<dbReference type="GeneID" id="98346041"/>
<dbReference type="KEGG" id="saw:SAHV_1666"/>
<dbReference type="HOGENOM" id="CLU_169643_3_0_9"/>
<dbReference type="GO" id="GO:0022625">
    <property type="term" value="C:cytosolic large ribosomal subunit"/>
    <property type="evidence" value="ECO:0007669"/>
    <property type="project" value="TreeGrafter"/>
</dbReference>
<dbReference type="GO" id="GO:0003735">
    <property type="term" value="F:structural constituent of ribosome"/>
    <property type="evidence" value="ECO:0007669"/>
    <property type="project" value="InterPro"/>
</dbReference>
<dbReference type="GO" id="GO:0006412">
    <property type="term" value="P:translation"/>
    <property type="evidence" value="ECO:0007669"/>
    <property type="project" value="UniProtKB-UniRule"/>
</dbReference>
<dbReference type="FunFam" id="4.10.410.60:FF:000001">
    <property type="entry name" value="50S ribosomal protein L35"/>
    <property type="match status" value="1"/>
</dbReference>
<dbReference type="Gene3D" id="4.10.410.60">
    <property type="match status" value="1"/>
</dbReference>
<dbReference type="HAMAP" id="MF_00514">
    <property type="entry name" value="Ribosomal_bL35"/>
    <property type="match status" value="1"/>
</dbReference>
<dbReference type="InterPro" id="IPR001706">
    <property type="entry name" value="Ribosomal_bL35"/>
</dbReference>
<dbReference type="InterPro" id="IPR021137">
    <property type="entry name" value="Ribosomal_bL35-like"/>
</dbReference>
<dbReference type="InterPro" id="IPR018265">
    <property type="entry name" value="Ribosomal_bL35_CS"/>
</dbReference>
<dbReference type="InterPro" id="IPR037229">
    <property type="entry name" value="Ribosomal_bL35_sf"/>
</dbReference>
<dbReference type="NCBIfam" id="TIGR00001">
    <property type="entry name" value="rpmI_bact"/>
    <property type="match status" value="1"/>
</dbReference>
<dbReference type="PANTHER" id="PTHR33343">
    <property type="entry name" value="54S RIBOSOMAL PROTEIN BL35M"/>
    <property type="match status" value="1"/>
</dbReference>
<dbReference type="PANTHER" id="PTHR33343:SF1">
    <property type="entry name" value="LARGE RIBOSOMAL SUBUNIT PROTEIN BL35M"/>
    <property type="match status" value="1"/>
</dbReference>
<dbReference type="Pfam" id="PF01632">
    <property type="entry name" value="Ribosomal_L35p"/>
    <property type="match status" value="1"/>
</dbReference>
<dbReference type="PRINTS" id="PR00064">
    <property type="entry name" value="RIBOSOMALL35"/>
</dbReference>
<dbReference type="SUPFAM" id="SSF143034">
    <property type="entry name" value="L35p-like"/>
    <property type="match status" value="1"/>
</dbReference>
<dbReference type="PROSITE" id="PS00936">
    <property type="entry name" value="RIBOSOMAL_L35"/>
    <property type="match status" value="1"/>
</dbReference>
<feature type="chain" id="PRO_1000050772" description="Large ribosomal subunit protein bL35">
    <location>
        <begin position="1"/>
        <end position="66"/>
    </location>
</feature>
<feature type="region of interest" description="Disordered" evidence="2">
    <location>
        <begin position="1"/>
        <end position="49"/>
    </location>
</feature>
<feature type="compositionally biased region" description="Basic residues" evidence="2">
    <location>
        <begin position="1"/>
        <end position="16"/>
    </location>
</feature>
<feature type="compositionally biased region" description="Basic residues" evidence="2">
    <location>
        <begin position="38"/>
        <end position="49"/>
    </location>
</feature>
<name>RL35_STAA1</name>
<keyword id="KW-0687">Ribonucleoprotein</keyword>
<keyword id="KW-0689">Ribosomal protein</keyword>
<comment type="similarity">
    <text evidence="1">Belongs to the bacterial ribosomal protein bL35 family.</text>
</comment>
<sequence length="66" mass="7697">MPKMKTHRGAAKRVKRTASGQLKRSRAFTSHLFANKSTKQKRQLRKARLVSKSDMKRVKQLLAYKK</sequence>
<gene>
    <name evidence="1" type="primary">rpmI</name>
    <name type="ordered locus">SAHV_1666</name>
</gene>
<proteinExistence type="inferred from homology"/>
<reference key="1">
    <citation type="journal article" date="2008" name="Antimicrob. Agents Chemother.">
        <title>Mutated response regulator graR is responsible for phenotypic conversion of Staphylococcus aureus from heterogeneous vancomycin-intermediate resistance to vancomycin-intermediate resistance.</title>
        <authorList>
            <person name="Neoh H.-M."/>
            <person name="Cui L."/>
            <person name="Yuzawa H."/>
            <person name="Takeuchi F."/>
            <person name="Matsuo M."/>
            <person name="Hiramatsu K."/>
        </authorList>
    </citation>
    <scope>NUCLEOTIDE SEQUENCE [LARGE SCALE GENOMIC DNA]</scope>
    <source>
        <strain>Mu3 / ATCC 700698</strain>
    </source>
</reference>
<evidence type="ECO:0000255" key="1">
    <source>
        <dbReference type="HAMAP-Rule" id="MF_00514"/>
    </source>
</evidence>
<evidence type="ECO:0000256" key="2">
    <source>
        <dbReference type="SAM" id="MobiDB-lite"/>
    </source>
</evidence>
<evidence type="ECO:0000305" key="3"/>
<organism>
    <name type="scientific">Staphylococcus aureus (strain Mu3 / ATCC 700698)</name>
    <dbReference type="NCBI Taxonomy" id="418127"/>
    <lineage>
        <taxon>Bacteria</taxon>
        <taxon>Bacillati</taxon>
        <taxon>Bacillota</taxon>
        <taxon>Bacilli</taxon>
        <taxon>Bacillales</taxon>
        <taxon>Staphylococcaceae</taxon>
        <taxon>Staphylococcus</taxon>
    </lineage>
</organism>